<evidence type="ECO:0000250" key="1"/>
<evidence type="ECO:0000305" key="2"/>
<reference key="1">
    <citation type="journal article" date="2004" name="Genome Res.">
        <title>Genome sequence of Haloarcula marismortui: a halophilic archaeon from the Dead Sea.</title>
        <authorList>
            <person name="Baliga N.S."/>
            <person name="Bonneau R."/>
            <person name="Facciotti M.T."/>
            <person name="Pan M."/>
            <person name="Glusman G."/>
            <person name="Deutsch E.W."/>
            <person name="Shannon P."/>
            <person name="Chiu Y."/>
            <person name="Weng R.S."/>
            <person name="Gan R.R."/>
            <person name="Hung P."/>
            <person name="Date S.V."/>
            <person name="Marcotte E."/>
            <person name="Hood L."/>
            <person name="Ng W.V."/>
        </authorList>
    </citation>
    <scope>NUCLEOTIDE SEQUENCE [LARGE SCALE GENOMIC DNA]</scope>
    <source>
        <strain>ATCC 43049 / DSM 3752 / JCM 8966 / VKM B-1809</strain>
    </source>
</reference>
<accession>Q5UWH2</accession>
<organism>
    <name type="scientific">Haloarcula marismortui (strain ATCC 43049 / DSM 3752 / JCM 8966 / VKM B-1809)</name>
    <name type="common">Halobacterium marismortui</name>
    <dbReference type="NCBI Taxonomy" id="272569"/>
    <lineage>
        <taxon>Archaea</taxon>
        <taxon>Methanobacteriati</taxon>
        <taxon>Methanobacteriota</taxon>
        <taxon>Stenosarchaea group</taxon>
        <taxon>Halobacteria</taxon>
        <taxon>Halobacteriales</taxon>
        <taxon>Haloarculaceae</taxon>
        <taxon>Haloarcula</taxon>
    </lineage>
</organism>
<comment type="catalytic activity">
    <reaction>
        <text>N(6)-[(R)-dihydrolipoyl]-L-lysyl-[protein] + NAD(+) = N(6)-[(R)-lipoyl]-L-lysyl-[protein] + NADH + H(+)</text>
        <dbReference type="Rhea" id="RHEA:15045"/>
        <dbReference type="Rhea" id="RHEA-COMP:10474"/>
        <dbReference type="Rhea" id="RHEA-COMP:10475"/>
        <dbReference type="ChEBI" id="CHEBI:15378"/>
        <dbReference type="ChEBI" id="CHEBI:57540"/>
        <dbReference type="ChEBI" id="CHEBI:57945"/>
        <dbReference type="ChEBI" id="CHEBI:83099"/>
        <dbReference type="ChEBI" id="CHEBI:83100"/>
        <dbReference type="EC" id="1.8.1.4"/>
    </reaction>
</comment>
<comment type="cofactor">
    <cofactor evidence="1">
        <name>FAD</name>
        <dbReference type="ChEBI" id="CHEBI:57692"/>
    </cofactor>
    <text evidence="1">Binds 1 FAD per subunit.</text>
</comment>
<comment type="subunit">
    <text evidence="1">Homodimer.</text>
</comment>
<comment type="subcellular location">
    <subcellularLocation>
        <location evidence="1">Cytoplasm</location>
    </subcellularLocation>
</comment>
<comment type="miscellaneous">
    <text evidence="1">The active site is a redox-active disulfide bond.</text>
</comment>
<comment type="similarity">
    <text evidence="2">Belongs to the class-I pyridine nucleotide-disulfide oxidoreductase family.</text>
</comment>
<sequence>MVVGDVTTSTDVLVIGAGPGGYVAAIRAAQLALDVTLVEKGEYGGACLNRGCIPSKALIHGSKLASEAGQAEELGIYADPTVALDEMINWKDGVVDQLTSGIEQLCTAAGVNLLKGTAEFADENKVRIIHQGEGQGSESLKFENCIIATGSRPIEIPGFGFEDERIVSSDGALNFDTVPDELVIVGAGYIGMELATVYSRLGSDVSVIEMLEQALPSYEEDIASIVRKRAERLGVDFHFGYTADSWAASDGKAVLTAVPADEAAHDSDIELTADRILVAVGRRPVTDTLSIDDAGVETNAQGFIPTDSTCRTNKEHIFAVGDVAGEPMLAHKGSKEGEVAAEVIAGEPAAVDYQALPAAVFTDPEIGTVGLTENEAANKGMTPVTGEFQFQASGRALTANRAEGFVRIIATKETERVIGAQIVGPEASELIAEIAAMIEMGAKLEDIGSTVHTHPTLSEAIMEAAQNAREKAIHRRN</sequence>
<gene>
    <name type="primary">lpdA3</name>
    <name type="ordered locus">rrnB0197</name>
</gene>
<dbReference type="EC" id="1.8.1.4"/>
<dbReference type="EMBL" id="AY596298">
    <property type="protein sequence ID" value="AAV48381.1"/>
    <property type="molecule type" value="Genomic_DNA"/>
</dbReference>
<dbReference type="RefSeq" id="WP_011224953.1">
    <property type="nucleotide sequence ID" value="NC_006397.1"/>
</dbReference>
<dbReference type="SMR" id="Q5UWH2"/>
<dbReference type="STRING" id="272569.rrnB0197"/>
<dbReference type="PaxDb" id="272569-rrnB0197"/>
<dbReference type="EnsemblBacteria" id="AAV48381">
    <property type="protein sequence ID" value="AAV48381"/>
    <property type="gene ID" value="rrnB0197"/>
</dbReference>
<dbReference type="GeneID" id="40151147"/>
<dbReference type="KEGG" id="hma:rrnB0197"/>
<dbReference type="PATRIC" id="fig|272569.17.peg.4209"/>
<dbReference type="eggNOG" id="arCOG01068">
    <property type="taxonomic scope" value="Archaea"/>
</dbReference>
<dbReference type="HOGENOM" id="CLU_016755_0_1_2"/>
<dbReference type="Proteomes" id="UP000001169">
    <property type="component" value="Chromosome II"/>
</dbReference>
<dbReference type="GO" id="GO:0005737">
    <property type="term" value="C:cytoplasm"/>
    <property type="evidence" value="ECO:0007669"/>
    <property type="project" value="UniProtKB-SubCell"/>
</dbReference>
<dbReference type="GO" id="GO:0004148">
    <property type="term" value="F:dihydrolipoyl dehydrogenase (NADH) activity"/>
    <property type="evidence" value="ECO:0007669"/>
    <property type="project" value="UniProtKB-EC"/>
</dbReference>
<dbReference type="GO" id="GO:0050660">
    <property type="term" value="F:flavin adenine dinucleotide binding"/>
    <property type="evidence" value="ECO:0007669"/>
    <property type="project" value="InterPro"/>
</dbReference>
<dbReference type="GO" id="GO:0006103">
    <property type="term" value="P:2-oxoglutarate metabolic process"/>
    <property type="evidence" value="ECO:0007669"/>
    <property type="project" value="TreeGrafter"/>
</dbReference>
<dbReference type="FunFam" id="3.30.390.30:FF:000001">
    <property type="entry name" value="Dihydrolipoyl dehydrogenase"/>
    <property type="match status" value="1"/>
</dbReference>
<dbReference type="Gene3D" id="3.30.390.30">
    <property type="match status" value="1"/>
</dbReference>
<dbReference type="Gene3D" id="3.50.50.60">
    <property type="entry name" value="FAD/NAD(P)-binding domain"/>
    <property type="match status" value="2"/>
</dbReference>
<dbReference type="InterPro" id="IPR050151">
    <property type="entry name" value="Class-I_Pyr_Nuc-Dis_Oxidored"/>
</dbReference>
<dbReference type="InterPro" id="IPR036188">
    <property type="entry name" value="FAD/NAD-bd_sf"/>
</dbReference>
<dbReference type="InterPro" id="IPR023753">
    <property type="entry name" value="FAD/NAD-binding_dom"/>
</dbReference>
<dbReference type="InterPro" id="IPR016156">
    <property type="entry name" value="FAD/NAD-linked_Rdtase_dimer_sf"/>
</dbReference>
<dbReference type="InterPro" id="IPR006258">
    <property type="entry name" value="Lipoamide_DH"/>
</dbReference>
<dbReference type="InterPro" id="IPR001100">
    <property type="entry name" value="Pyr_nuc-diS_OxRdtase"/>
</dbReference>
<dbReference type="InterPro" id="IPR004099">
    <property type="entry name" value="Pyr_nucl-diS_OxRdtase_dimer"/>
</dbReference>
<dbReference type="InterPro" id="IPR012999">
    <property type="entry name" value="Pyr_OxRdtase_I_AS"/>
</dbReference>
<dbReference type="NCBIfam" id="TIGR01350">
    <property type="entry name" value="lipoamide_DH"/>
    <property type="match status" value="1"/>
</dbReference>
<dbReference type="PANTHER" id="PTHR22912:SF160">
    <property type="entry name" value="DIHYDROLIPOYL DEHYDROGENASE"/>
    <property type="match status" value="1"/>
</dbReference>
<dbReference type="PANTHER" id="PTHR22912">
    <property type="entry name" value="DISULFIDE OXIDOREDUCTASE"/>
    <property type="match status" value="1"/>
</dbReference>
<dbReference type="Pfam" id="PF07992">
    <property type="entry name" value="Pyr_redox_2"/>
    <property type="match status" value="1"/>
</dbReference>
<dbReference type="Pfam" id="PF02852">
    <property type="entry name" value="Pyr_redox_dim"/>
    <property type="match status" value="1"/>
</dbReference>
<dbReference type="PIRSF" id="PIRSF000350">
    <property type="entry name" value="Mercury_reductase_MerA"/>
    <property type="match status" value="1"/>
</dbReference>
<dbReference type="PRINTS" id="PR00368">
    <property type="entry name" value="FADPNR"/>
</dbReference>
<dbReference type="PRINTS" id="PR00411">
    <property type="entry name" value="PNDRDTASEI"/>
</dbReference>
<dbReference type="SUPFAM" id="SSF51905">
    <property type="entry name" value="FAD/NAD(P)-binding domain"/>
    <property type="match status" value="1"/>
</dbReference>
<dbReference type="SUPFAM" id="SSF55424">
    <property type="entry name" value="FAD/NAD-linked reductases, dimerisation (C-terminal) domain"/>
    <property type="match status" value="1"/>
</dbReference>
<dbReference type="PROSITE" id="PS00076">
    <property type="entry name" value="PYRIDINE_REDOX_1"/>
    <property type="match status" value="1"/>
</dbReference>
<proteinExistence type="inferred from homology"/>
<keyword id="KW-0963">Cytoplasm</keyword>
<keyword id="KW-1015">Disulfide bond</keyword>
<keyword id="KW-0274">FAD</keyword>
<keyword id="KW-0285">Flavoprotein</keyword>
<keyword id="KW-0520">NAD</keyword>
<keyword id="KW-0560">Oxidoreductase</keyword>
<keyword id="KW-0676">Redox-active center</keyword>
<keyword id="KW-1185">Reference proteome</keyword>
<protein>
    <recommendedName>
        <fullName>Dihydrolipoyl dehydrogenase 3</fullName>
        <ecNumber>1.8.1.4</ecNumber>
    </recommendedName>
    <alternativeName>
        <fullName>Dihydrolipoamide dehydrogenase 3</fullName>
    </alternativeName>
</protein>
<name>DLDH3_HALMA</name>
<feature type="chain" id="PRO_0000068056" description="Dihydrolipoyl dehydrogenase 3">
    <location>
        <begin position="1"/>
        <end position="477"/>
    </location>
</feature>
<feature type="active site" description="Proton acceptor" evidence="1">
    <location>
        <position position="454"/>
    </location>
</feature>
<feature type="binding site" evidence="1">
    <location>
        <begin position="39"/>
        <end position="47"/>
    </location>
    <ligand>
        <name>FAD</name>
        <dbReference type="ChEBI" id="CHEBI:57692"/>
    </ligand>
</feature>
<feature type="binding site" evidence="1">
    <location>
        <position position="56"/>
    </location>
    <ligand>
        <name>FAD</name>
        <dbReference type="ChEBI" id="CHEBI:57692"/>
    </ligand>
</feature>
<feature type="binding site" evidence="1">
    <location>
        <position position="118"/>
    </location>
    <ligand>
        <name>FAD</name>
        <dbReference type="ChEBI" id="CHEBI:57692"/>
    </ligand>
</feature>
<feature type="binding site" evidence="1">
    <location>
        <begin position="186"/>
        <end position="190"/>
    </location>
    <ligand>
        <name>NAD(+)</name>
        <dbReference type="ChEBI" id="CHEBI:57540"/>
    </ligand>
</feature>
<feature type="binding site" evidence="1">
    <location>
        <position position="209"/>
    </location>
    <ligand>
        <name>NAD(+)</name>
        <dbReference type="ChEBI" id="CHEBI:57540"/>
    </ligand>
</feature>
<feature type="binding site" evidence="1">
    <location>
        <begin position="279"/>
        <end position="282"/>
    </location>
    <ligand>
        <name>NAD(+)</name>
        <dbReference type="ChEBI" id="CHEBI:57540"/>
    </ligand>
</feature>
<feature type="binding site" evidence="1">
    <location>
        <position position="322"/>
    </location>
    <ligand>
        <name>FAD</name>
        <dbReference type="ChEBI" id="CHEBI:57692"/>
    </ligand>
</feature>
<feature type="binding site" evidence="1">
    <location>
        <position position="330"/>
    </location>
    <ligand>
        <name>FAD</name>
        <dbReference type="ChEBI" id="CHEBI:57692"/>
    </ligand>
</feature>
<feature type="disulfide bond" description="Redox-active" evidence="1">
    <location>
        <begin position="47"/>
        <end position="52"/>
    </location>
</feature>